<gene>
    <name type="ordered locus">SAUSA300_0825</name>
</gene>
<keyword id="KW-0216">Detoxification</keyword>
<keyword id="KW-0285">Flavoprotein</keyword>
<keyword id="KW-0288">FMN</keyword>
<keyword id="KW-0503">Monooxygenase</keyword>
<keyword id="KW-0547">Nucleotide-binding</keyword>
<keyword id="KW-0560">Oxidoreductase</keyword>
<evidence type="ECO:0000250" key="1">
    <source>
        <dbReference type="UniProtKB" id="D0V3Y4"/>
    </source>
</evidence>
<evidence type="ECO:0000250" key="2">
    <source>
        <dbReference type="UniProtKB" id="Q9HWH9"/>
    </source>
</evidence>
<evidence type="ECO:0000305" key="3"/>
<organism>
    <name type="scientific">Staphylococcus aureus (strain USA300)</name>
    <dbReference type="NCBI Taxonomy" id="367830"/>
    <lineage>
        <taxon>Bacteria</taxon>
        <taxon>Bacillati</taxon>
        <taxon>Bacillota</taxon>
        <taxon>Bacilli</taxon>
        <taxon>Bacillales</taxon>
        <taxon>Staphylococcaceae</taxon>
        <taxon>Staphylococcus</taxon>
    </lineage>
</organism>
<sequence>MWNKNRLTQMLSIEYPIIQAGMAGSTTPKLVASVSNSGGLGTIGAGYFNTQQLEDEIDYVRQLTSNSFGVNVFVPSQQSYTSSQIENMNAWLKPYRRALHLEEPVVKITEEQQFKCHIDTIIKKQVPVCCFTFGIPSEQIISRLKAANVKLIGTATSVDEAIANEKAGMDAIVAQGSEAGGHRGSFLKPKNQLPMVGTISLVPQIVDVVSIPVIAAGGIMDGRGVLASIVLGAEGVQMGTAFLTSQDSNASELLRDAIINSKETDTVITKAFSGKLARGINNRFIEEMSQYEGDIPDYPIQNELTSSIRKAAANIGDKELIHMWSGQSPRLATTHPANTIMSNIINQINQIMQYK</sequence>
<feature type="chain" id="PRO_0000360901" description="Probable nitronate monooxygenase">
    <location>
        <begin position="1"/>
        <end position="355"/>
    </location>
</feature>
<feature type="binding site" evidence="2">
    <location>
        <position position="71"/>
    </location>
    <ligand>
        <name>FMN</name>
        <dbReference type="ChEBI" id="CHEBI:58210"/>
    </ligand>
</feature>
<feature type="binding site" evidence="2">
    <location>
        <position position="175"/>
    </location>
    <ligand>
        <name>FMN</name>
        <dbReference type="ChEBI" id="CHEBI:58210"/>
    </ligand>
</feature>
<feature type="binding site" evidence="2">
    <location>
        <position position="180"/>
    </location>
    <ligand>
        <name>FMN</name>
        <dbReference type="ChEBI" id="CHEBI:58210"/>
    </ligand>
</feature>
<feature type="binding site" evidence="2">
    <location>
        <position position="218"/>
    </location>
    <ligand>
        <name>FMN</name>
        <dbReference type="ChEBI" id="CHEBI:58210"/>
    </ligand>
</feature>
<feature type="binding site" evidence="2">
    <location>
        <begin position="237"/>
        <end position="240"/>
    </location>
    <ligand>
        <name>FMN</name>
        <dbReference type="ChEBI" id="CHEBI:58210"/>
    </ligand>
</feature>
<reference key="1">
    <citation type="journal article" date="2006" name="Lancet">
        <title>Complete genome sequence of USA300, an epidemic clone of community-acquired meticillin-resistant Staphylococcus aureus.</title>
        <authorList>
            <person name="Diep B.A."/>
            <person name="Gill S.R."/>
            <person name="Chang R.F."/>
            <person name="Phan T.H."/>
            <person name="Chen J.H."/>
            <person name="Davidson M.G."/>
            <person name="Lin F."/>
            <person name="Lin J."/>
            <person name="Carleton H.A."/>
            <person name="Mongodin E.F."/>
            <person name="Sensabaugh G.F."/>
            <person name="Perdreau-Remington F."/>
        </authorList>
    </citation>
    <scope>NUCLEOTIDE SEQUENCE [LARGE SCALE GENOMIC DNA]</scope>
    <source>
        <strain>USA300</strain>
    </source>
</reference>
<dbReference type="EC" id="1.13.12.-" evidence="2"/>
<dbReference type="EMBL" id="CP000255">
    <property type="protein sequence ID" value="ABD22280.1"/>
    <property type="molecule type" value="Genomic_DNA"/>
</dbReference>
<dbReference type="RefSeq" id="WP_000267247.1">
    <property type="nucleotide sequence ID" value="NZ_CP027476.1"/>
</dbReference>
<dbReference type="SMR" id="Q2FIF3"/>
<dbReference type="KEGG" id="saa:SAUSA300_0825"/>
<dbReference type="HOGENOM" id="CLU_038732_5_1_9"/>
<dbReference type="OMA" id="IDDLPSC"/>
<dbReference type="Proteomes" id="UP000001939">
    <property type="component" value="Chromosome"/>
</dbReference>
<dbReference type="GO" id="GO:0018580">
    <property type="term" value="F:nitronate monooxygenase activity"/>
    <property type="evidence" value="ECO:0007669"/>
    <property type="project" value="InterPro"/>
</dbReference>
<dbReference type="GO" id="GO:0000166">
    <property type="term" value="F:nucleotide binding"/>
    <property type="evidence" value="ECO:0007669"/>
    <property type="project" value="UniProtKB-KW"/>
</dbReference>
<dbReference type="GO" id="GO:0009636">
    <property type="term" value="P:response to toxic substance"/>
    <property type="evidence" value="ECO:0007669"/>
    <property type="project" value="UniProtKB-KW"/>
</dbReference>
<dbReference type="CDD" id="cd04730">
    <property type="entry name" value="NPD_like"/>
    <property type="match status" value="1"/>
</dbReference>
<dbReference type="FunFam" id="3.20.20.70:FF:000154">
    <property type="entry name" value="Probable nitronate monooxygenase"/>
    <property type="match status" value="1"/>
</dbReference>
<dbReference type="Gene3D" id="3.20.20.70">
    <property type="entry name" value="Aldolase class I"/>
    <property type="match status" value="1"/>
</dbReference>
<dbReference type="InterPro" id="IPR013785">
    <property type="entry name" value="Aldolase_TIM"/>
</dbReference>
<dbReference type="InterPro" id="IPR004136">
    <property type="entry name" value="NMO"/>
</dbReference>
<dbReference type="PANTHER" id="PTHR42747">
    <property type="entry name" value="NITRONATE MONOOXYGENASE-RELATED"/>
    <property type="match status" value="1"/>
</dbReference>
<dbReference type="PANTHER" id="PTHR42747:SF3">
    <property type="entry name" value="NITRONATE MONOOXYGENASE-RELATED"/>
    <property type="match status" value="1"/>
</dbReference>
<dbReference type="Pfam" id="PF03060">
    <property type="entry name" value="NMO"/>
    <property type="match status" value="1"/>
</dbReference>
<dbReference type="SUPFAM" id="SSF51412">
    <property type="entry name" value="Inosine monophosphate dehydrogenase (IMPDH)"/>
    <property type="match status" value="1"/>
</dbReference>
<comment type="function">
    <text evidence="2">Nitronate monooxygenase that uses molecular oxygen to catalyze the oxidative denitrification of alkyl nitronates. Acts on propionate 3-nitronate (P3N), the presumed physiological substrate. Probably functions in the detoxification of P3N, a metabolic poison produced by plants and fungi as a defense mechanism.</text>
</comment>
<comment type="catalytic activity">
    <reaction evidence="1">
        <text>3 propionate 3-nitronate + 3 O2 + H2O = 3 3-oxopropanoate + 2 nitrate + nitrite + H2O2 + 3 H(+)</text>
        <dbReference type="Rhea" id="RHEA:57332"/>
        <dbReference type="ChEBI" id="CHEBI:15377"/>
        <dbReference type="ChEBI" id="CHEBI:15378"/>
        <dbReference type="ChEBI" id="CHEBI:15379"/>
        <dbReference type="ChEBI" id="CHEBI:16240"/>
        <dbReference type="ChEBI" id="CHEBI:16301"/>
        <dbReference type="ChEBI" id="CHEBI:17632"/>
        <dbReference type="ChEBI" id="CHEBI:33190"/>
        <dbReference type="ChEBI" id="CHEBI:136067"/>
    </reaction>
</comment>
<comment type="cofactor">
    <cofactor evidence="2">
        <name>FMN</name>
        <dbReference type="ChEBI" id="CHEBI:58210"/>
    </cofactor>
    <text evidence="2">Binds 1 FMN per subunit.</text>
</comment>
<comment type="miscellaneous">
    <text evidence="3">P3N is a potent irreversible inhibitor of the key enzyme succinate dehydrogenase in the Krebs cycle and electron transport chain. P3N has been shown to be a toxic metabolite to bacteria, plants, fungi, mammals or any organism that uses succinate dehydrogenase.</text>
</comment>
<comment type="similarity">
    <text evidence="3">Belongs to the nitronate monooxygenase family. NMO class I subfamily.</text>
</comment>
<name>NMO_STAA3</name>
<accession>Q2FIF3</accession>
<proteinExistence type="inferred from homology"/>
<protein>
    <recommendedName>
        <fullName>Probable nitronate monooxygenase</fullName>
        <shortName>NMO</shortName>
        <ecNumber evidence="2">1.13.12.-</ecNumber>
    </recommendedName>
    <alternativeName>
        <fullName>Propionate 3-nitronate monooxygenase</fullName>
        <shortName>P3N monooxygenase</shortName>
    </alternativeName>
</protein>